<proteinExistence type="evidence at protein level"/>
<keyword id="KW-0067">ATP-binding</keyword>
<keyword id="KW-0903">Direct protein sequencing</keyword>
<keyword id="KW-0418">Kinase</keyword>
<keyword id="KW-0547">Nucleotide-binding</keyword>
<keyword id="KW-1185">Reference proteome</keyword>
<keyword id="KW-0808">Transferase</keyword>
<accession>Q68FH4</accession>
<reference key="1">
    <citation type="journal article" date="2004" name="Genome Res.">
        <title>The status, quality, and expansion of the NIH full-length cDNA project: the Mammalian Gene Collection (MGC).</title>
        <authorList>
            <consortium name="The MGC Project Team"/>
        </authorList>
    </citation>
    <scope>NUCLEOTIDE SEQUENCE [LARGE SCALE MRNA]</scope>
    <source>
        <strain>C57BL/6J</strain>
        <tissue>Brain</tissue>
    </source>
</reference>
<reference key="2">
    <citation type="submission" date="2009-01" db="UniProtKB">
        <authorList>
            <person name="Lubec G."/>
            <person name="Sunyer B."/>
            <person name="Chen W.-Q."/>
        </authorList>
    </citation>
    <scope>PROTEIN SEQUENCE OF 313-327</scope>
    <scope>IDENTIFICATION BY MASS SPECTROMETRY</scope>
    <source>
        <strain>OF1</strain>
        <tissue>Hippocampus</tissue>
    </source>
</reference>
<reference key="3">
    <citation type="journal article" date="2010" name="Cell">
        <title>A tissue-specific atlas of mouse protein phosphorylation and expression.</title>
        <authorList>
            <person name="Huttlin E.L."/>
            <person name="Jedrychowski M.P."/>
            <person name="Elias J.E."/>
            <person name="Goswami T."/>
            <person name="Rad R."/>
            <person name="Beausoleil S.A."/>
            <person name="Villen J."/>
            <person name="Haas W."/>
            <person name="Sowa M.E."/>
            <person name="Gygi S.P."/>
        </authorList>
    </citation>
    <scope>IDENTIFICATION BY MASS SPECTROMETRY [LARGE SCALE ANALYSIS]</scope>
    <source>
        <tissue>Kidney</tissue>
        <tissue>Liver</tissue>
        <tissue>Lung</tissue>
        <tissue>Pancreas</tissue>
        <tissue>Spleen</tissue>
        <tissue>Testis</tissue>
    </source>
</reference>
<organism>
    <name type="scientific">Mus musculus</name>
    <name type="common">Mouse</name>
    <dbReference type="NCBI Taxonomy" id="10090"/>
    <lineage>
        <taxon>Eukaryota</taxon>
        <taxon>Metazoa</taxon>
        <taxon>Chordata</taxon>
        <taxon>Craniata</taxon>
        <taxon>Vertebrata</taxon>
        <taxon>Euteleostomi</taxon>
        <taxon>Mammalia</taxon>
        <taxon>Eutheria</taxon>
        <taxon>Euarchontoglires</taxon>
        <taxon>Glires</taxon>
        <taxon>Rodentia</taxon>
        <taxon>Myomorpha</taxon>
        <taxon>Muroidea</taxon>
        <taxon>Muridae</taxon>
        <taxon>Murinae</taxon>
        <taxon>Mus</taxon>
        <taxon>Mus</taxon>
    </lineage>
</organism>
<evidence type="ECO:0000250" key="1">
    <source>
        <dbReference type="UniProtKB" id="P04385"/>
    </source>
</evidence>
<evidence type="ECO:0000250" key="2">
    <source>
        <dbReference type="UniProtKB" id="Q01415"/>
    </source>
</evidence>
<evidence type="ECO:0000250" key="3">
    <source>
        <dbReference type="UniProtKB" id="Q9HHB6"/>
    </source>
</evidence>
<evidence type="ECO:0000305" key="4"/>
<dbReference type="EC" id="2.7.1.157"/>
<dbReference type="EMBL" id="BC079843">
    <property type="protein sequence ID" value="AAH79843.1"/>
    <property type="molecule type" value="mRNA"/>
</dbReference>
<dbReference type="CCDS" id="CCDS71134.1"/>
<dbReference type="RefSeq" id="NP_001277931.1">
    <property type="nucleotide sequence ID" value="NM_001291002.1"/>
</dbReference>
<dbReference type="SMR" id="Q68FH4"/>
<dbReference type="BioGRID" id="213790">
    <property type="interactions" value="1"/>
</dbReference>
<dbReference type="FunCoup" id="Q68FH4">
    <property type="interactions" value="2381"/>
</dbReference>
<dbReference type="STRING" id="10090.ENSMUSP00000092186"/>
<dbReference type="iPTMnet" id="Q68FH4"/>
<dbReference type="PhosphoSitePlus" id="Q68FH4"/>
<dbReference type="jPOST" id="Q68FH4"/>
<dbReference type="PaxDb" id="10090-ENSMUSP00000028636"/>
<dbReference type="ProteomicsDB" id="267417"/>
<dbReference type="Pumba" id="Q68FH4"/>
<dbReference type="Antibodypedia" id="24645">
    <property type="antibodies" value="262 antibodies from 26 providers"/>
</dbReference>
<dbReference type="DNASU" id="69976"/>
<dbReference type="Ensembl" id="ENSMUST00000094604.9">
    <property type="protein sequence ID" value="ENSMUSP00000092186.3"/>
    <property type="gene ID" value="ENSMUSG00000027207.16"/>
</dbReference>
<dbReference type="GeneID" id="69976"/>
<dbReference type="KEGG" id="mmu:69976"/>
<dbReference type="UCSC" id="uc008mdg.2">
    <property type="organism name" value="mouse"/>
</dbReference>
<dbReference type="AGR" id="MGI:1917226"/>
<dbReference type="CTD" id="2585"/>
<dbReference type="MGI" id="MGI:1917226">
    <property type="gene designation" value="Galk2"/>
</dbReference>
<dbReference type="VEuPathDB" id="HostDB:ENSMUSG00000027207"/>
<dbReference type="eggNOG" id="KOG0631">
    <property type="taxonomic scope" value="Eukaryota"/>
</dbReference>
<dbReference type="GeneTree" id="ENSGT00950000183187"/>
<dbReference type="InParanoid" id="Q68FH4"/>
<dbReference type="OrthoDB" id="187738at2759"/>
<dbReference type="PhylomeDB" id="Q68FH4"/>
<dbReference type="BioGRID-ORCS" id="69976">
    <property type="hits" value="2 hits in 77 CRISPR screens"/>
</dbReference>
<dbReference type="ChiTaRS" id="Galk2">
    <property type="organism name" value="mouse"/>
</dbReference>
<dbReference type="PRO" id="PR:Q68FH4"/>
<dbReference type="Proteomes" id="UP000000589">
    <property type="component" value="Chromosome 2"/>
</dbReference>
<dbReference type="RNAct" id="Q68FH4">
    <property type="molecule type" value="protein"/>
</dbReference>
<dbReference type="Bgee" id="ENSMUSG00000027207">
    <property type="expression patterns" value="Expressed in right kidney and 256 other cell types or tissues"/>
</dbReference>
<dbReference type="ExpressionAtlas" id="Q68FH4">
    <property type="expression patterns" value="baseline and differential"/>
</dbReference>
<dbReference type="GO" id="GO:0005737">
    <property type="term" value="C:cytoplasm"/>
    <property type="evidence" value="ECO:0007669"/>
    <property type="project" value="InterPro"/>
</dbReference>
<dbReference type="GO" id="GO:0005524">
    <property type="term" value="F:ATP binding"/>
    <property type="evidence" value="ECO:0007669"/>
    <property type="project" value="UniProtKB-KW"/>
</dbReference>
<dbReference type="GO" id="GO:0004335">
    <property type="term" value="F:galactokinase activity"/>
    <property type="evidence" value="ECO:0007669"/>
    <property type="project" value="Ensembl"/>
</dbReference>
<dbReference type="GO" id="GO:0033858">
    <property type="term" value="F:N-acetylgalactosamine kinase activity"/>
    <property type="evidence" value="ECO:0007669"/>
    <property type="project" value="UniProtKB-EC"/>
</dbReference>
<dbReference type="GO" id="GO:0006012">
    <property type="term" value="P:galactose metabolic process"/>
    <property type="evidence" value="ECO:0007669"/>
    <property type="project" value="InterPro"/>
</dbReference>
<dbReference type="FunFam" id="3.30.70.3170:FF:000001">
    <property type="entry name" value="galactokinase isoform X1"/>
    <property type="match status" value="1"/>
</dbReference>
<dbReference type="FunFam" id="1.20.1440.340:FF:000001">
    <property type="entry name" value="N-acetylgalactosamine kinase isoform 2"/>
    <property type="match status" value="1"/>
</dbReference>
<dbReference type="FunFam" id="3.30.230.10:FF:000023">
    <property type="entry name" value="Putative N-acetylgalactosamine kinase"/>
    <property type="match status" value="1"/>
</dbReference>
<dbReference type="Gene3D" id="1.20.1440.340">
    <property type="match status" value="1"/>
</dbReference>
<dbReference type="Gene3D" id="3.30.230.10">
    <property type="match status" value="1"/>
</dbReference>
<dbReference type="Gene3D" id="3.30.70.3170">
    <property type="match status" value="1"/>
</dbReference>
<dbReference type="InterPro" id="IPR000705">
    <property type="entry name" value="Galactokinase"/>
</dbReference>
<dbReference type="InterPro" id="IPR019741">
    <property type="entry name" value="Galactokinase_CS"/>
</dbReference>
<dbReference type="InterPro" id="IPR019539">
    <property type="entry name" value="GalKase_N"/>
</dbReference>
<dbReference type="InterPro" id="IPR013750">
    <property type="entry name" value="GHMP_kinase_C_dom"/>
</dbReference>
<dbReference type="InterPro" id="IPR036554">
    <property type="entry name" value="GHMP_kinase_C_sf"/>
</dbReference>
<dbReference type="InterPro" id="IPR006204">
    <property type="entry name" value="GHMP_kinase_N_dom"/>
</dbReference>
<dbReference type="InterPro" id="IPR006203">
    <property type="entry name" value="GHMP_knse_ATP-bd_CS"/>
</dbReference>
<dbReference type="InterPro" id="IPR006206">
    <property type="entry name" value="Mevalonate/galactokinase"/>
</dbReference>
<dbReference type="InterPro" id="IPR020568">
    <property type="entry name" value="Ribosomal_Su5_D2-typ_SF"/>
</dbReference>
<dbReference type="InterPro" id="IPR014721">
    <property type="entry name" value="Ribsml_uS5_D2-typ_fold_subgr"/>
</dbReference>
<dbReference type="NCBIfam" id="TIGR00131">
    <property type="entry name" value="gal_kin"/>
    <property type="match status" value="1"/>
</dbReference>
<dbReference type="PANTHER" id="PTHR10457:SF7">
    <property type="entry name" value="GALACTOKINASE-RELATED"/>
    <property type="match status" value="1"/>
</dbReference>
<dbReference type="PANTHER" id="PTHR10457">
    <property type="entry name" value="MEVALONATE KINASE/GALACTOKINASE"/>
    <property type="match status" value="1"/>
</dbReference>
<dbReference type="Pfam" id="PF10509">
    <property type="entry name" value="GalKase_gal_bdg"/>
    <property type="match status" value="1"/>
</dbReference>
<dbReference type="Pfam" id="PF08544">
    <property type="entry name" value="GHMP_kinases_C"/>
    <property type="match status" value="1"/>
</dbReference>
<dbReference type="Pfam" id="PF00288">
    <property type="entry name" value="GHMP_kinases_N"/>
    <property type="match status" value="1"/>
</dbReference>
<dbReference type="PIRSF" id="PIRSF000530">
    <property type="entry name" value="Galactokinase"/>
    <property type="match status" value="1"/>
</dbReference>
<dbReference type="PRINTS" id="PR00473">
    <property type="entry name" value="GALCTOKINASE"/>
</dbReference>
<dbReference type="PRINTS" id="PR00959">
    <property type="entry name" value="MEVGALKINASE"/>
</dbReference>
<dbReference type="SUPFAM" id="SSF55060">
    <property type="entry name" value="GHMP Kinase, C-terminal domain"/>
    <property type="match status" value="1"/>
</dbReference>
<dbReference type="SUPFAM" id="SSF54211">
    <property type="entry name" value="Ribosomal protein S5 domain 2-like"/>
    <property type="match status" value="1"/>
</dbReference>
<dbReference type="PROSITE" id="PS00106">
    <property type="entry name" value="GALACTOKINASE"/>
    <property type="match status" value="1"/>
</dbReference>
<dbReference type="PROSITE" id="PS00627">
    <property type="entry name" value="GHMP_KINASES_ATP"/>
    <property type="match status" value="1"/>
</dbReference>
<gene>
    <name type="primary">Galk2</name>
</gene>
<protein>
    <recommendedName>
        <fullName>N-acetylgalactosamine kinase</fullName>
        <ecNumber>2.7.1.157</ecNumber>
    </recommendedName>
    <alternativeName>
        <fullName>GalNAc kinase</fullName>
    </alternativeName>
    <alternativeName>
        <fullName>Galactokinase 2</fullName>
    </alternativeName>
</protein>
<name>GALK2_MOUSE</name>
<comment type="function">
    <text evidence="2">Acts on GalNAc (By similarity). Also acts as a galactokinase when galactose is present at high concentrations (By similarity).</text>
</comment>
<comment type="catalytic activity">
    <reaction>
        <text>N-acetyl-alpha-D-galactosamine + ATP = N-acetyl-alpha-D-galactosamine 1-phosphate + ADP + H(+)</text>
        <dbReference type="Rhea" id="RHEA:12617"/>
        <dbReference type="ChEBI" id="CHEBI:15378"/>
        <dbReference type="ChEBI" id="CHEBI:30616"/>
        <dbReference type="ChEBI" id="CHEBI:40356"/>
        <dbReference type="ChEBI" id="CHEBI:61970"/>
        <dbReference type="ChEBI" id="CHEBI:456216"/>
        <dbReference type="EC" id="2.7.1.157"/>
    </reaction>
</comment>
<comment type="subunit">
    <text evidence="2">Monomer.</text>
</comment>
<comment type="similarity">
    <text evidence="4">Belongs to the GHMP kinase family. GalK subfamily.</text>
</comment>
<sequence length="458" mass="50503">MAAEDPATRRVQVAEHPRLLKLKEMFNSKFGSTPKFYVRAPGRVNIIGEHIDYCGYSVIPMAVEQDMLIAVEPVKTHTLQLANTDPLYPDFSTTANNICIDKTKPLWHNYFLCGFKGIQEHFGLSKLPGMNCLVDGNIPPSSGLSSSSALVCCAGLVTLTVLGLRLSKVELAEICAKSERYIGTEGGGMDQSISFLAEEGTAKLIEFSPLRATNVKLPSGAVFVIANSCMEMNKAATSHFNVRVMECRLAAKVLAKHKGLQWDNVLRLEEVQSKLGISLEEMLLVTEDALHPEPYSREEICRCLGISLERLRTQILTPNTQDELTFKLYQRAKHVYSEAARVLQFKQVCEDAPDNAVQLLGELMNQSHRSCRDMYECSCPELDQLVDICRKFGAKGSRLTGAGWGGCTVSLVPADMLSSFLASVHEAYYQGNTSRLAQEKHSLFATKPGGGALVFREV</sequence>
<feature type="chain" id="PRO_0000184648" description="N-acetylgalactosamine kinase">
    <location>
        <begin position="1"/>
        <end position="458"/>
    </location>
</feature>
<feature type="active site" description="Proton acceptor" evidence="3">
    <location>
        <position position="190"/>
    </location>
</feature>
<feature type="binding site" evidence="1">
    <location>
        <position position="43"/>
    </location>
    <ligand>
        <name>alpha-D-galactose</name>
        <dbReference type="ChEBI" id="CHEBI:28061"/>
    </ligand>
</feature>
<feature type="binding site" evidence="1">
    <location>
        <position position="49"/>
    </location>
    <ligand>
        <name>alpha-D-galactose</name>
        <dbReference type="ChEBI" id="CHEBI:28061"/>
    </ligand>
</feature>
<feature type="binding site" evidence="1">
    <location>
        <position position="50"/>
    </location>
    <ligand>
        <name>alpha-D-galactose</name>
        <dbReference type="ChEBI" id="CHEBI:28061"/>
    </ligand>
</feature>
<feature type="binding site" evidence="1">
    <location>
        <position position="52"/>
    </location>
    <ligand>
        <name>alpha-D-galactose</name>
        <dbReference type="ChEBI" id="CHEBI:28061"/>
    </ligand>
</feature>
<feature type="binding site" evidence="1">
    <location>
        <position position="143"/>
    </location>
    <ligand>
        <name>ATP</name>
        <dbReference type="ChEBI" id="CHEBI:30616"/>
    </ligand>
</feature>
<feature type="binding site" evidence="1">
    <location>
        <position position="145"/>
    </location>
    <ligand>
        <name>ATP</name>
        <dbReference type="ChEBI" id="CHEBI:30616"/>
    </ligand>
</feature>
<feature type="binding site" evidence="1">
    <location>
        <position position="146"/>
    </location>
    <ligand>
        <name>ATP</name>
        <dbReference type="ChEBI" id="CHEBI:30616"/>
    </ligand>
</feature>
<feature type="binding site" evidence="1">
    <location>
        <position position="190"/>
    </location>
    <ligand>
        <name>alpha-D-galactose</name>
        <dbReference type="ChEBI" id="CHEBI:28061"/>
    </ligand>
</feature>
<feature type="binding site" evidence="1">
    <location>
        <position position="233"/>
    </location>
    <ligand>
        <name>ATP</name>
        <dbReference type="ChEBI" id="CHEBI:30616"/>
    </ligand>
</feature>
<feature type="binding site" evidence="1">
    <location>
        <position position="234"/>
    </location>
    <ligand>
        <name>ATP</name>
        <dbReference type="ChEBI" id="CHEBI:30616"/>
    </ligand>
</feature>
<feature type="site" description="Transition state stabilizer" evidence="3">
    <location>
        <position position="43"/>
    </location>
</feature>